<gene>
    <name evidence="1" type="primary">ftsQ</name>
    <name type="ordered locus">RHOS4_06990</name>
    <name type="ORF">RSP_2112</name>
</gene>
<name>FTSQ_CERS4</name>
<organism>
    <name type="scientific">Cereibacter sphaeroides (strain ATCC 17023 / DSM 158 / JCM 6121 / CCUG 31486 / LMG 2827 / NBRC 12203 / NCIMB 8253 / ATH 2.4.1.)</name>
    <name type="common">Rhodobacter sphaeroides</name>
    <dbReference type="NCBI Taxonomy" id="272943"/>
    <lineage>
        <taxon>Bacteria</taxon>
        <taxon>Pseudomonadati</taxon>
        <taxon>Pseudomonadota</taxon>
        <taxon>Alphaproteobacteria</taxon>
        <taxon>Rhodobacterales</taxon>
        <taxon>Paracoccaceae</taxon>
        <taxon>Cereibacter</taxon>
    </lineage>
</organism>
<keyword id="KW-0131">Cell cycle</keyword>
<keyword id="KW-0132">Cell division</keyword>
<keyword id="KW-0997">Cell inner membrane</keyword>
<keyword id="KW-1003">Cell membrane</keyword>
<keyword id="KW-0472">Membrane</keyword>
<keyword id="KW-1185">Reference proteome</keyword>
<keyword id="KW-0812">Transmembrane</keyword>
<keyword id="KW-1133">Transmembrane helix</keyword>
<feature type="chain" id="PRO_0000414688" description="Cell division protein FtsQ">
    <location>
        <begin position="1"/>
        <end position="308"/>
    </location>
</feature>
<feature type="topological domain" description="Cytoplasmic" evidence="1">
    <location>
        <begin position="1"/>
        <end position="46"/>
    </location>
</feature>
<feature type="transmembrane region" description="Helical" evidence="1">
    <location>
        <begin position="47"/>
        <end position="67"/>
    </location>
</feature>
<feature type="topological domain" description="Periplasmic" evidence="1">
    <location>
        <begin position="68"/>
        <end position="308"/>
    </location>
</feature>
<feature type="domain" description="POTRA" evidence="2">
    <location>
        <begin position="92"/>
        <end position="160"/>
    </location>
</feature>
<feature type="region of interest" description="Disordered" evidence="3">
    <location>
        <begin position="1"/>
        <end position="28"/>
    </location>
</feature>
<feature type="compositionally biased region" description="Basic and acidic residues" evidence="3">
    <location>
        <begin position="18"/>
        <end position="28"/>
    </location>
</feature>
<sequence length="308" mass="34168">MQSLSFPPNRRTPRLAPPRRETGRRDPAPSRWAYRAQRLWLTPMFRTALRVGLPIVGVLLVVALIFASADRRAAMAGAFTGLVDSFQQRPEFMVTLLSVDGASPELSDRIRATLALKLPLSSFDIDLTAARARIESIDAVAQAEVRVRSGGLLEVRVTEREPAIIWRRAANLVLLDGTGRRVDDLAFRSERGDLAVIAGEGAERAVPEALEILAAARPILERIRGLVRMGERRWDIVLDRGQRIQLPVEEPVAAVERMIALDEAEDLLDRDVISVDLRIKDRPVLRLAPYALNAVRRARGIDTSGSDL</sequence>
<evidence type="ECO:0000255" key="1">
    <source>
        <dbReference type="HAMAP-Rule" id="MF_00911"/>
    </source>
</evidence>
<evidence type="ECO:0000255" key="2">
    <source>
        <dbReference type="PROSITE-ProRule" id="PRU01115"/>
    </source>
</evidence>
<evidence type="ECO:0000256" key="3">
    <source>
        <dbReference type="SAM" id="MobiDB-lite"/>
    </source>
</evidence>
<comment type="function">
    <text evidence="1">Essential cell division protein.</text>
</comment>
<comment type="subcellular location">
    <subcellularLocation>
        <location evidence="1">Cell inner membrane</location>
        <topology evidence="1">Single-pass type II membrane protein</topology>
    </subcellularLocation>
    <text evidence="1">Localizes to the division septum.</text>
</comment>
<comment type="similarity">
    <text evidence="1">Belongs to the FtsQ/DivIB family. FtsQ subfamily.</text>
</comment>
<reference key="1">
    <citation type="submission" date="2005-09" db="EMBL/GenBank/DDBJ databases">
        <title>Complete sequence of chromosome 1 of Rhodobacter sphaeroides 2.4.1.</title>
        <authorList>
            <person name="Copeland A."/>
            <person name="Lucas S."/>
            <person name="Lapidus A."/>
            <person name="Barry K."/>
            <person name="Detter J.C."/>
            <person name="Glavina T."/>
            <person name="Hammon N."/>
            <person name="Israni S."/>
            <person name="Pitluck S."/>
            <person name="Richardson P."/>
            <person name="Mackenzie C."/>
            <person name="Choudhary M."/>
            <person name="Larimer F."/>
            <person name="Hauser L.J."/>
            <person name="Land M."/>
            <person name="Donohue T.J."/>
            <person name="Kaplan S."/>
        </authorList>
    </citation>
    <scope>NUCLEOTIDE SEQUENCE [LARGE SCALE GENOMIC DNA]</scope>
    <source>
        <strain>ATCC 17023 / DSM 158 / JCM 6121 / CCUG 31486 / LMG 2827 / NBRC 12203 / NCIMB 8253 / ATH 2.4.1.</strain>
    </source>
</reference>
<protein>
    <recommendedName>
        <fullName evidence="1">Cell division protein FtsQ</fullName>
    </recommendedName>
</protein>
<accession>Q3J4L7</accession>
<dbReference type="EMBL" id="CP000143">
    <property type="protein sequence ID" value="ABA78267.1"/>
    <property type="molecule type" value="Genomic_DNA"/>
</dbReference>
<dbReference type="RefSeq" id="WP_011337245.1">
    <property type="nucleotide sequence ID" value="NC_007493.2"/>
</dbReference>
<dbReference type="RefSeq" id="YP_352168.1">
    <property type="nucleotide sequence ID" value="NC_007493.2"/>
</dbReference>
<dbReference type="SMR" id="Q3J4L7"/>
<dbReference type="STRING" id="272943.RSP_2112"/>
<dbReference type="EnsemblBacteria" id="ABA78267">
    <property type="protein sequence ID" value="ABA78267"/>
    <property type="gene ID" value="RSP_2112"/>
</dbReference>
<dbReference type="GeneID" id="3719583"/>
<dbReference type="KEGG" id="rsp:RSP_2112"/>
<dbReference type="PATRIC" id="fig|272943.9.peg.1005"/>
<dbReference type="eggNOG" id="COG1589">
    <property type="taxonomic scope" value="Bacteria"/>
</dbReference>
<dbReference type="OrthoDB" id="9783091at2"/>
<dbReference type="PhylomeDB" id="Q3J4L7"/>
<dbReference type="Proteomes" id="UP000002703">
    <property type="component" value="Chromosome 1"/>
</dbReference>
<dbReference type="GO" id="GO:0032153">
    <property type="term" value="C:cell division site"/>
    <property type="evidence" value="ECO:0007669"/>
    <property type="project" value="UniProtKB-UniRule"/>
</dbReference>
<dbReference type="GO" id="GO:0005886">
    <property type="term" value="C:plasma membrane"/>
    <property type="evidence" value="ECO:0007669"/>
    <property type="project" value="UniProtKB-SubCell"/>
</dbReference>
<dbReference type="GO" id="GO:0090529">
    <property type="term" value="P:cell septum assembly"/>
    <property type="evidence" value="ECO:0007669"/>
    <property type="project" value="InterPro"/>
</dbReference>
<dbReference type="GO" id="GO:0043093">
    <property type="term" value="P:FtsZ-dependent cytokinesis"/>
    <property type="evidence" value="ECO:0007669"/>
    <property type="project" value="UniProtKB-UniRule"/>
</dbReference>
<dbReference type="HAMAP" id="MF_00911">
    <property type="entry name" value="FtsQ_subfam"/>
    <property type="match status" value="1"/>
</dbReference>
<dbReference type="InterPro" id="IPR005548">
    <property type="entry name" value="Cell_div_FtsQ/DivIB_C"/>
</dbReference>
<dbReference type="InterPro" id="IPR026579">
    <property type="entry name" value="FtsQ"/>
</dbReference>
<dbReference type="InterPro" id="IPR034746">
    <property type="entry name" value="POTRA"/>
</dbReference>
<dbReference type="InterPro" id="IPR013685">
    <property type="entry name" value="POTRA_FtsQ_type"/>
</dbReference>
<dbReference type="PANTHER" id="PTHR35851">
    <property type="entry name" value="CELL DIVISION PROTEIN FTSQ"/>
    <property type="match status" value="1"/>
</dbReference>
<dbReference type="PANTHER" id="PTHR35851:SF1">
    <property type="entry name" value="CELL DIVISION PROTEIN FTSQ"/>
    <property type="match status" value="1"/>
</dbReference>
<dbReference type="Pfam" id="PF03799">
    <property type="entry name" value="FtsQ_DivIB_C"/>
    <property type="match status" value="1"/>
</dbReference>
<dbReference type="Pfam" id="PF08478">
    <property type="entry name" value="POTRA_1"/>
    <property type="match status" value="1"/>
</dbReference>
<dbReference type="PROSITE" id="PS51779">
    <property type="entry name" value="POTRA"/>
    <property type="match status" value="1"/>
</dbReference>
<proteinExistence type="inferred from homology"/>